<protein>
    <recommendedName>
        <fullName evidence="1">4-hydroxy-tetrahydrodipicolinate reductase</fullName>
        <shortName evidence="1">HTPA reductase</shortName>
        <ecNumber evidence="1">1.17.1.8</ecNumber>
    </recommendedName>
</protein>
<proteinExistence type="inferred from homology"/>
<keyword id="KW-0028">Amino-acid biosynthesis</keyword>
<keyword id="KW-0963">Cytoplasm</keyword>
<keyword id="KW-0220">Diaminopimelate biosynthesis</keyword>
<keyword id="KW-0457">Lysine biosynthesis</keyword>
<keyword id="KW-0520">NAD</keyword>
<keyword id="KW-0521">NADP</keyword>
<keyword id="KW-0560">Oxidoreductase</keyword>
<gene>
    <name evidence="1" type="primary">dapB</name>
    <name type="ordered locus">Maeo_0670</name>
</gene>
<accession>A6UUT2</accession>
<feature type="chain" id="PRO_1000008584" description="4-hydroxy-tetrahydrodipicolinate reductase">
    <location>
        <begin position="1"/>
        <end position="273"/>
    </location>
</feature>
<feature type="active site" description="Proton donor/acceptor" evidence="1">
    <location>
        <position position="161"/>
    </location>
</feature>
<feature type="active site" description="Proton donor" evidence="1">
    <location>
        <position position="165"/>
    </location>
</feature>
<feature type="binding site" evidence="1">
    <location>
        <begin position="8"/>
        <end position="13"/>
    </location>
    <ligand>
        <name>NAD(+)</name>
        <dbReference type="ChEBI" id="CHEBI:57540"/>
    </ligand>
</feature>
<feature type="binding site" evidence="1">
    <location>
        <position position="35"/>
    </location>
    <ligand>
        <name>NAD(+)</name>
        <dbReference type="ChEBI" id="CHEBI:57540"/>
    </ligand>
</feature>
<feature type="binding site" evidence="1">
    <location>
        <begin position="103"/>
        <end position="105"/>
    </location>
    <ligand>
        <name>NAD(+)</name>
        <dbReference type="ChEBI" id="CHEBI:57540"/>
    </ligand>
</feature>
<feature type="binding site" evidence="1">
    <location>
        <begin position="129"/>
        <end position="132"/>
    </location>
    <ligand>
        <name>NAD(+)</name>
        <dbReference type="ChEBI" id="CHEBI:57540"/>
    </ligand>
</feature>
<feature type="binding site" evidence="1">
    <location>
        <position position="162"/>
    </location>
    <ligand>
        <name>(S)-2,3,4,5-tetrahydrodipicolinate</name>
        <dbReference type="ChEBI" id="CHEBI:16845"/>
    </ligand>
</feature>
<feature type="binding site" evidence="1">
    <location>
        <begin position="171"/>
        <end position="172"/>
    </location>
    <ligand>
        <name>(S)-2,3,4,5-tetrahydrodipicolinate</name>
        <dbReference type="ChEBI" id="CHEBI:16845"/>
    </ligand>
</feature>
<name>DAPB_META3</name>
<dbReference type="EC" id="1.17.1.8" evidence="1"/>
<dbReference type="EMBL" id="CP000743">
    <property type="protein sequence ID" value="ABR56254.1"/>
    <property type="molecule type" value="Genomic_DNA"/>
</dbReference>
<dbReference type="RefSeq" id="WP_011973386.1">
    <property type="nucleotide sequence ID" value="NC_009635.1"/>
</dbReference>
<dbReference type="SMR" id="A6UUT2"/>
<dbReference type="STRING" id="419665.Maeo_0670"/>
<dbReference type="GeneID" id="5326437"/>
<dbReference type="KEGG" id="mae:Maeo_0670"/>
<dbReference type="eggNOG" id="arCOG04393">
    <property type="taxonomic scope" value="Archaea"/>
</dbReference>
<dbReference type="HOGENOM" id="CLU_047479_2_1_2"/>
<dbReference type="OrthoDB" id="195035at2157"/>
<dbReference type="UniPathway" id="UPA00034">
    <property type="reaction ID" value="UER00018"/>
</dbReference>
<dbReference type="Proteomes" id="UP000001106">
    <property type="component" value="Chromosome"/>
</dbReference>
<dbReference type="GO" id="GO:0005737">
    <property type="term" value="C:cytoplasm"/>
    <property type="evidence" value="ECO:0007669"/>
    <property type="project" value="UniProtKB-SubCell"/>
</dbReference>
<dbReference type="GO" id="GO:0008839">
    <property type="term" value="F:4-hydroxy-tetrahydrodipicolinate reductase"/>
    <property type="evidence" value="ECO:0007669"/>
    <property type="project" value="UniProtKB-EC"/>
</dbReference>
<dbReference type="GO" id="GO:0051287">
    <property type="term" value="F:NAD binding"/>
    <property type="evidence" value="ECO:0007669"/>
    <property type="project" value="UniProtKB-UniRule"/>
</dbReference>
<dbReference type="GO" id="GO:0050661">
    <property type="term" value="F:NADP binding"/>
    <property type="evidence" value="ECO:0007669"/>
    <property type="project" value="UniProtKB-UniRule"/>
</dbReference>
<dbReference type="GO" id="GO:0016726">
    <property type="term" value="F:oxidoreductase activity, acting on CH or CH2 groups, NAD or NADP as acceptor"/>
    <property type="evidence" value="ECO:0007669"/>
    <property type="project" value="UniProtKB-UniRule"/>
</dbReference>
<dbReference type="GO" id="GO:0019877">
    <property type="term" value="P:diaminopimelate biosynthetic process"/>
    <property type="evidence" value="ECO:0007669"/>
    <property type="project" value="UniProtKB-UniRule"/>
</dbReference>
<dbReference type="GO" id="GO:0009089">
    <property type="term" value="P:lysine biosynthetic process via diaminopimelate"/>
    <property type="evidence" value="ECO:0007669"/>
    <property type="project" value="UniProtKB-UniRule"/>
</dbReference>
<dbReference type="CDD" id="cd02274">
    <property type="entry name" value="DHDPR_N"/>
    <property type="match status" value="1"/>
</dbReference>
<dbReference type="FunFam" id="3.30.360.10:FF:000004">
    <property type="entry name" value="4-hydroxy-tetrahydrodipicolinate reductase"/>
    <property type="match status" value="1"/>
</dbReference>
<dbReference type="Gene3D" id="3.30.360.10">
    <property type="entry name" value="Dihydrodipicolinate Reductase, domain 2"/>
    <property type="match status" value="1"/>
</dbReference>
<dbReference type="Gene3D" id="3.40.50.720">
    <property type="entry name" value="NAD(P)-binding Rossmann-like Domain"/>
    <property type="match status" value="1"/>
</dbReference>
<dbReference type="HAMAP" id="MF_00102">
    <property type="entry name" value="DapB"/>
    <property type="match status" value="1"/>
</dbReference>
<dbReference type="InterPro" id="IPR022663">
    <property type="entry name" value="DapB_C"/>
</dbReference>
<dbReference type="InterPro" id="IPR000846">
    <property type="entry name" value="DapB_N"/>
</dbReference>
<dbReference type="InterPro" id="IPR022664">
    <property type="entry name" value="DapB_N_CS"/>
</dbReference>
<dbReference type="InterPro" id="IPR023940">
    <property type="entry name" value="DHDPR_bac"/>
</dbReference>
<dbReference type="InterPro" id="IPR036291">
    <property type="entry name" value="NAD(P)-bd_dom_sf"/>
</dbReference>
<dbReference type="NCBIfam" id="TIGR00036">
    <property type="entry name" value="dapB"/>
    <property type="match status" value="1"/>
</dbReference>
<dbReference type="PANTHER" id="PTHR20836:SF0">
    <property type="entry name" value="4-HYDROXY-TETRAHYDRODIPICOLINATE REDUCTASE 1, CHLOROPLASTIC-RELATED"/>
    <property type="match status" value="1"/>
</dbReference>
<dbReference type="PANTHER" id="PTHR20836">
    <property type="entry name" value="DIHYDRODIPICOLINATE REDUCTASE"/>
    <property type="match status" value="1"/>
</dbReference>
<dbReference type="Pfam" id="PF05173">
    <property type="entry name" value="DapB_C"/>
    <property type="match status" value="1"/>
</dbReference>
<dbReference type="Pfam" id="PF01113">
    <property type="entry name" value="DapB_N"/>
    <property type="match status" value="1"/>
</dbReference>
<dbReference type="PIRSF" id="PIRSF000161">
    <property type="entry name" value="DHPR"/>
    <property type="match status" value="1"/>
</dbReference>
<dbReference type="SUPFAM" id="SSF55347">
    <property type="entry name" value="Glyceraldehyde-3-phosphate dehydrogenase-like, C-terminal domain"/>
    <property type="match status" value="1"/>
</dbReference>
<dbReference type="SUPFAM" id="SSF51735">
    <property type="entry name" value="NAD(P)-binding Rossmann-fold domains"/>
    <property type="match status" value="1"/>
</dbReference>
<dbReference type="PROSITE" id="PS01298">
    <property type="entry name" value="DAPB"/>
    <property type="match status" value="1"/>
</dbReference>
<reference key="1">
    <citation type="submission" date="2007-06" db="EMBL/GenBank/DDBJ databases">
        <title>Complete sequence of Methanococcus aeolicus Nankai-3.</title>
        <authorList>
            <consortium name="US DOE Joint Genome Institute"/>
            <person name="Copeland A."/>
            <person name="Lucas S."/>
            <person name="Lapidus A."/>
            <person name="Barry K."/>
            <person name="Glavina del Rio T."/>
            <person name="Dalin E."/>
            <person name="Tice H."/>
            <person name="Pitluck S."/>
            <person name="Chain P."/>
            <person name="Malfatti S."/>
            <person name="Shin M."/>
            <person name="Vergez L."/>
            <person name="Schmutz J."/>
            <person name="Larimer F."/>
            <person name="Land M."/>
            <person name="Hauser L."/>
            <person name="Kyrpides N."/>
            <person name="Lykidis A."/>
            <person name="Sieprawska-Lupa M."/>
            <person name="Whitman W.B."/>
            <person name="Richardson P."/>
        </authorList>
    </citation>
    <scope>NUCLEOTIDE SEQUENCE [LARGE SCALE GENOMIC DNA]</scope>
    <source>
        <strain>ATCC BAA-1280 / DSM 17508 / OCM 812 / Nankai-3</strain>
    </source>
</reference>
<sequence length="273" mass="29791">MIKVMVTGALGRMGSSIIKTLCENKEDYKVVGAIDVPNHPKKGIDIGELIGIGNIGAPLETADNLEKVIKETRPDVLVDFTAPAPCVNTVKIASENNVNLVVGTTGFTNEQMEEMEEIINKNNIGAVISQNYAIGVNIFFKTLELLAQKIGDYDIEIVEMHHKFKKDAPSGTALRALEIIQNNLNRDSKAIYGREGLVGERTKEEICIHALRGGDVVGDHTVIFAGDGERLELTHKASSRQAFVSGVVLAVKYIADKKDGKIYNTFDVLNLNE</sequence>
<comment type="function">
    <text evidence="1">Catalyzes the conversion of 4-hydroxy-tetrahydrodipicolinate (HTPA) to tetrahydrodipicolinate.</text>
</comment>
<comment type="catalytic activity">
    <reaction evidence="1">
        <text>(S)-2,3,4,5-tetrahydrodipicolinate + NAD(+) + H2O = (2S,4S)-4-hydroxy-2,3,4,5-tetrahydrodipicolinate + NADH + H(+)</text>
        <dbReference type="Rhea" id="RHEA:35323"/>
        <dbReference type="ChEBI" id="CHEBI:15377"/>
        <dbReference type="ChEBI" id="CHEBI:15378"/>
        <dbReference type="ChEBI" id="CHEBI:16845"/>
        <dbReference type="ChEBI" id="CHEBI:57540"/>
        <dbReference type="ChEBI" id="CHEBI:57945"/>
        <dbReference type="ChEBI" id="CHEBI:67139"/>
        <dbReference type="EC" id="1.17.1.8"/>
    </reaction>
</comment>
<comment type="catalytic activity">
    <reaction evidence="1">
        <text>(S)-2,3,4,5-tetrahydrodipicolinate + NADP(+) + H2O = (2S,4S)-4-hydroxy-2,3,4,5-tetrahydrodipicolinate + NADPH + H(+)</text>
        <dbReference type="Rhea" id="RHEA:35331"/>
        <dbReference type="ChEBI" id="CHEBI:15377"/>
        <dbReference type="ChEBI" id="CHEBI:15378"/>
        <dbReference type="ChEBI" id="CHEBI:16845"/>
        <dbReference type="ChEBI" id="CHEBI:57783"/>
        <dbReference type="ChEBI" id="CHEBI:58349"/>
        <dbReference type="ChEBI" id="CHEBI:67139"/>
        <dbReference type="EC" id="1.17.1.8"/>
    </reaction>
</comment>
<comment type="pathway">
    <text evidence="1">Amino-acid biosynthesis; L-lysine biosynthesis via DAP pathway; (S)-tetrahydrodipicolinate from L-aspartate: step 4/4.</text>
</comment>
<comment type="subcellular location">
    <subcellularLocation>
        <location evidence="1">Cytoplasm</location>
    </subcellularLocation>
</comment>
<comment type="similarity">
    <text evidence="1">Belongs to the DapB family.</text>
</comment>
<comment type="caution">
    <text evidence="2">Was originally thought to be a dihydrodipicolinate reductase (DHDPR), catalyzing the conversion of dihydrodipicolinate to tetrahydrodipicolinate. However, it was shown in E.coli that the substrate of the enzymatic reaction is not dihydrodipicolinate (DHDP) but in fact (2S,4S)-4-hydroxy-2,3,4,5-tetrahydrodipicolinic acid (HTPA), the product released by the DapA-catalyzed reaction.</text>
</comment>
<organism>
    <name type="scientific">Methanococcus aeolicus (strain ATCC BAA-1280 / DSM 17508 / OCM 812 / Nankai-3)</name>
    <dbReference type="NCBI Taxonomy" id="419665"/>
    <lineage>
        <taxon>Archaea</taxon>
        <taxon>Methanobacteriati</taxon>
        <taxon>Methanobacteriota</taxon>
        <taxon>Methanomada group</taxon>
        <taxon>Methanococci</taxon>
        <taxon>Methanococcales</taxon>
        <taxon>Methanococcaceae</taxon>
        <taxon>Methanococcus</taxon>
    </lineage>
</organism>
<evidence type="ECO:0000255" key="1">
    <source>
        <dbReference type="HAMAP-Rule" id="MF_00102"/>
    </source>
</evidence>
<evidence type="ECO:0000305" key="2"/>